<dbReference type="EMBL" id="AY261363">
    <property type="status" value="NOT_ANNOTATED_CDS"/>
    <property type="molecule type" value="Genomic_DNA"/>
</dbReference>
<dbReference type="SMR" id="P0CA24"/>
<dbReference type="Proteomes" id="UP000000859">
    <property type="component" value="Segment"/>
</dbReference>
<dbReference type="GO" id="GO:0000428">
    <property type="term" value="C:DNA-directed RNA polymerase complex"/>
    <property type="evidence" value="ECO:0007669"/>
    <property type="project" value="UniProtKB-KW"/>
</dbReference>
<dbReference type="GO" id="GO:0030430">
    <property type="term" value="C:host cell cytoplasm"/>
    <property type="evidence" value="ECO:0007669"/>
    <property type="project" value="UniProtKB-SubCell"/>
</dbReference>
<dbReference type="GO" id="GO:0008270">
    <property type="term" value="F:zinc ion binding"/>
    <property type="evidence" value="ECO:0007669"/>
    <property type="project" value="UniProtKB-KW"/>
</dbReference>
<dbReference type="GO" id="GO:0019083">
    <property type="term" value="P:viral transcription"/>
    <property type="evidence" value="ECO:0007669"/>
    <property type="project" value="UniProtKB-KW"/>
</dbReference>
<sequence>MKICKACSSCMVRTYVDGNIIFRCSCGESVQGDSQNLLVSSKVYHTGEMEDKYKIFIKNAPFDPTNCQIKKDCPNCHLDYLTQICIGSQKIIILVCRCGYTSNRG</sequence>
<organismHost>
    <name type="scientific">Ornithodoros</name>
    <name type="common">relapsing fever ticks</name>
    <dbReference type="NCBI Taxonomy" id="6937"/>
</organismHost>
<organismHost>
    <name type="scientific">Phacochoerus aethiopicus</name>
    <name type="common">Warthog</name>
    <dbReference type="NCBI Taxonomy" id="85517"/>
</organismHost>
<organismHost>
    <name type="scientific">Phacochoerus africanus</name>
    <name type="common">Warthog</name>
    <dbReference type="NCBI Taxonomy" id="41426"/>
</organismHost>
<organismHost>
    <name type="scientific">Potamochoerus larvatus</name>
    <name type="common">Bushpig</name>
    <dbReference type="NCBI Taxonomy" id="273792"/>
</organismHost>
<organismHost>
    <name type="scientific">Sus scrofa</name>
    <name type="common">Pig</name>
    <dbReference type="NCBI Taxonomy" id="9823"/>
</organismHost>
<reference key="1">
    <citation type="submission" date="2003-03" db="EMBL/GenBank/DDBJ databases">
        <title>African swine fever virus genomes.</title>
        <authorList>
            <person name="Kutish G.F."/>
            <person name="Rock D.L."/>
        </authorList>
    </citation>
    <scope>NUCLEOTIDE SEQUENCE [LARGE SCALE GENOMIC DNA]</scope>
</reference>
<evidence type="ECO:0000250" key="1">
    <source>
        <dbReference type="UniProtKB" id="P27999"/>
    </source>
</evidence>
<evidence type="ECO:0000250" key="2">
    <source>
        <dbReference type="UniProtKB" id="P36954"/>
    </source>
</evidence>
<evidence type="ECO:0000250" key="3">
    <source>
        <dbReference type="UniProtKB" id="Q65157"/>
    </source>
</evidence>
<evidence type="ECO:0000255" key="4"/>
<evidence type="ECO:0000305" key="5"/>
<feature type="chain" id="PRO_0000373488" description="DNA-directed RNA polymerase RPB9 homolog">
    <location>
        <begin position="1"/>
        <end position="105"/>
    </location>
</feature>
<feature type="zinc finger region" description="C4-type; atypical" evidence="4">
    <location>
        <begin position="4"/>
        <end position="26"/>
    </location>
</feature>
<feature type="binding site" evidence="1">
    <location>
        <position position="4"/>
    </location>
    <ligand>
        <name>Zn(2+)</name>
        <dbReference type="ChEBI" id="CHEBI:29105"/>
        <label>1</label>
    </ligand>
</feature>
<feature type="binding site" evidence="1">
    <location>
        <position position="7"/>
    </location>
    <ligand>
        <name>Zn(2+)</name>
        <dbReference type="ChEBI" id="CHEBI:29105"/>
        <label>1</label>
    </ligand>
</feature>
<feature type="binding site" evidence="1">
    <location>
        <position position="24"/>
    </location>
    <ligand>
        <name>Zn(2+)</name>
        <dbReference type="ChEBI" id="CHEBI:29105"/>
        <label>1</label>
    </ligand>
</feature>
<feature type="binding site" evidence="1">
    <location>
        <position position="26"/>
    </location>
    <ligand>
        <name>Zn(2+)</name>
        <dbReference type="ChEBI" id="CHEBI:29105"/>
        <label>1</label>
    </ligand>
</feature>
<feature type="binding site" evidence="1">
    <location>
        <position position="73"/>
    </location>
    <ligand>
        <name>Zn(2+)</name>
        <dbReference type="ChEBI" id="CHEBI:29105"/>
        <label>2</label>
    </ligand>
</feature>
<feature type="binding site" evidence="1">
    <location>
        <position position="76"/>
    </location>
    <ligand>
        <name>Zn(2+)</name>
        <dbReference type="ChEBI" id="CHEBI:29105"/>
        <label>2</label>
    </ligand>
</feature>
<feature type="binding site" evidence="1">
    <location>
        <position position="96"/>
    </location>
    <ligand>
        <name>Zn(2+)</name>
        <dbReference type="ChEBI" id="CHEBI:29105"/>
        <label>2</label>
    </ligand>
</feature>
<accession>P0CA24</accession>
<organism>
    <name type="scientific">African swine fever virus (isolate Tick/South Africa/Pretoriuskop Pr4/1996)</name>
    <name type="common">ASFV</name>
    <dbReference type="NCBI Taxonomy" id="561443"/>
    <lineage>
        <taxon>Viruses</taxon>
        <taxon>Varidnaviria</taxon>
        <taxon>Bamfordvirae</taxon>
        <taxon>Nucleocytoviricota</taxon>
        <taxon>Pokkesviricetes</taxon>
        <taxon>Asfuvirales</taxon>
        <taxon>Asfarviridae</taxon>
        <taxon>Asfivirus</taxon>
        <taxon>African swine fever virus</taxon>
    </lineage>
</organism>
<comment type="function">
    <text evidence="2">Component of the DNA-directed RNA polymerase (RNAP) that catalyzes the transcription in the cytoplasm of viral DNA into RNA using the four ribonucleoside triphosphates as substrates.</text>
</comment>
<comment type="subunit">
    <text evidence="3">Part of the viral DNA-directed RNA polymerase that consists of 8 polII-like subunits (RPB1, RPB2, RPB3, RPB5, RPB6, RPB7, RPB9, RPB10), a capping enzyme and a termination factor.</text>
</comment>
<comment type="subcellular location">
    <subcellularLocation>
        <location evidence="5">Host cytoplasm</location>
    </subcellularLocation>
</comment>
<comment type="induction">
    <text evidence="3">Expressed in the early phase of the viral replicative cycle.</text>
</comment>
<comment type="similarity">
    <text evidence="5">Belongs to the Asfivirus DNA-directed RNA polymerase RPB9 homolog family.</text>
</comment>
<keyword id="KW-0240">DNA-directed RNA polymerase</keyword>
<keyword id="KW-0244">Early protein</keyword>
<keyword id="KW-1035">Host cytoplasm</keyword>
<keyword id="KW-0479">Metal-binding</keyword>
<keyword id="KW-0804">Transcription</keyword>
<keyword id="KW-1195">Viral transcription</keyword>
<keyword id="KW-0862">Zinc</keyword>
<keyword id="KW-0863">Zinc-finger</keyword>
<protein>
    <recommendedName>
        <fullName evidence="3">DNA-directed RNA polymerase RPB9 homolog</fullName>
        <shortName evidence="5">RPB9 homolog</shortName>
    </recommendedName>
</protein>
<gene>
    <name type="ordered locus">Pret-077</name>
</gene>
<proteinExistence type="inferred from homology"/>
<name>RPB9_ASFP4</name>